<protein>
    <recommendedName>
        <fullName>Putative uncharacterized protein YGL262W</fullName>
    </recommendedName>
</protein>
<reference key="1">
    <citation type="journal article" date="1996" name="Yeast">
        <title>Sequence of a 39,411 bp DNA fragment covering the left end of chromosome VII of Saccharomyces cerevisiae.</title>
        <authorList>
            <person name="Coissac E."/>
            <person name="Maillier E."/>
            <person name="Robineau S."/>
            <person name="Netter P."/>
        </authorList>
    </citation>
    <scope>NUCLEOTIDE SEQUENCE [GENOMIC DNA]</scope>
    <source>
        <strain>ATCC 96604 / S288c / FY1679</strain>
    </source>
</reference>
<reference key="2">
    <citation type="journal article" date="1997" name="Nature">
        <title>The nucleotide sequence of Saccharomyces cerevisiae chromosome VII.</title>
        <authorList>
            <person name="Tettelin H."/>
            <person name="Agostoni-Carbone M.L."/>
            <person name="Albermann K."/>
            <person name="Albers M."/>
            <person name="Arroyo J."/>
            <person name="Backes U."/>
            <person name="Barreiros T."/>
            <person name="Bertani I."/>
            <person name="Bjourson A.J."/>
            <person name="Brueckner M."/>
            <person name="Bruschi C.V."/>
            <person name="Carignani G."/>
            <person name="Castagnoli L."/>
            <person name="Cerdan E."/>
            <person name="Clemente M.L."/>
            <person name="Coblenz A."/>
            <person name="Coglievina M."/>
            <person name="Coissac E."/>
            <person name="Defoor E."/>
            <person name="Del Bino S."/>
            <person name="Delius H."/>
            <person name="Delneri D."/>
            <person name="de Wergifosse P."/>
            <person name="Dujon B."/>
            <person name="Durand P."/>
            <person name="Entian K.-D."/>
            <person name="Eraso P."/>
            <person name="Escribano V."/>
            <person name="Fabiani L."/>
            <person name="Fartmann B."/>
            <person name="Feroli F."/>
            <person name="Feuermann M."/>
            <person name="Frontali L."/>
            <person name="Garcia-Gonzalez M."/>
            <person name="Garcia-Saez M.I."/>
            <person name="Goffeau A."/>
            <person name="Guerreiro P."/>
            <person name="Hani J."/>
            <person name="Hansen M."/>
            <person name="Hebling U."/>
            <person name="Hernandez K."/>
            <person name="Heumann K."/>
            <person name="Hilger F."/>
            <person name="Hofmann B."/>
            <person name="Indge K.J."/>
            <person name="James C.M."/>
            <person name="Klima R."/>
            <person name="Koetter P."/>
            <person name="Kramer B."/>
            <person name="Kramer W."/>
            <person name="Lauquin G."/>
            <person name="Leuther H."/>
            <person name="Louis E.J."/>
            <person name="Maillier E."/>
            <person name="Marconi A."/>
            <person name="Martegani E."/>
            <person name="Mazon M.J."/>
            <person name="Mazzoni C."/>
            <person name="McReynolds A.D.K."/>
            <person name="Melchioretto P."/>
            <person name="Mewes H.-W."/>
            <person name="Minenkova O."/>
            <person name="Mueller-Auer S."/>
            <person name="Nawrocki A."/>
            <person name="Netter P."/>
            <person name="Neu R."/>
            <person name="Nombela C."/>
            <person name="Oliver S.G."/>
            <person name="Panzeri L."/>
            <person name="Paoluzi S."/>
            <person name="Plevani P."/>
            <person name="Portetelle D."/>
            <person name="Portillo F."/>
            <person name="Potier S."/>
            <person name="Purnelle B."/>
            <person name="Rieger M."/>
            <person name="Riles L."/>
            <person name="Rinaldi T."/>
            <person name="Robben J."/>
            <person name="Rodrigues-Pousada C."/>
            <person name="Rodriguez-Belmonte E."/>
            <person name="Rodriguez-Torres A.M."/>
            <person name="Rose M."/>
            <person name="Ruzzi M."/>
            <person name="Saliola M."/>
            <person name="Sanchez-Perez M."/>
            <person name="Schaefer B."/>
            <person name="Schaefer M."/>
            <person name="Scharfe M."/>
            <person name="Schmidheini T."/>
            <person name="Schreer A."/>
            <person name="Skala J."/>
            <person name="Souciet J.-L."/>
            <person name="Steensma H.Y."/>
            <person name="Talla E."/>
            <person name="Thierry A."/>
            <person name="Vandenbol M."/>
            <person name="van der Aart Q.J.M."/>
            <person name="Van Dyck L."/>
            <person name="Vanoni M."/>
            <person name="Verhasselt P."/>
            <person name="Voet M."/>
            <person name="Volckaert G."/>
            <person name="Wambutt R."/>
            <person name="Watson M.D."/>
            <person name="Weber N."/>
            <person name="Wedler E."/>
            <person name="Wedler H."/>
            <person name="Wipfli P."/>
            <person name="Wolf K."/>
            <person name="Wright L.F."/>
            <person name="Zaccaria P."/>
            <person name="Zimmermann M."/>
            <person name="Zollner A."/>
            <person name="Kleine K."/>
        </authorList>
    </citation>
    <scope>NUCLEOTIDE SEQUENCE [LARGE SCALE GENOMIC DNA]</scope>
    <source>
        <strain>ATCC 204508 / S288c</strain>
    </source>
</reference>
<reference key="3">
    <citation type="journal article" date="2014" name="G3 (Bethesda)">
        <title>The reference genome sequence of Saccharomyces cerevisiae: Then and now.</title>
        <authorList>
            <person name="Engel S.R."/>
            <person name="Dietrich F.S."/>
            <person name="Fisk D.G."/>
            <person name="Binkley G."/>
            <person name="Balakrishnan R."/>
            <person name="Costanzo M.C."/>
            <person name="Dwight S.S."/>
            <person name="Hitz B.C."/>
            <person name="Karra K."/>
            <person name="Nash R.S."/>
            <person name="Weng S."/>
            <person name="Wong E.D."/>
            <person name="Lloyd P."/>
            <person name="Skrzypek M.S."/>
            <person name="Miyasato S.R."/>
            <person name="Simison M."/>
            <person name="Cherry J.M."/>
        </authorList>
    </citation>
    <scope>GENOME REANNOTATION</scope>
    <source>
        <strain>ATCC 204508 / S288c</strain>
    </source>
</reference>
<proteinExistence type="predicted"/>
<evidence type="ECO:0000305" key="1"/>
<gene>
    <name type="ordered locus">YGL262W</name>
    <name type="ORF">NRB175</name>
</gene>
<keyword id="KW-1185">Reference proteome</keyword>
<sequence>MRNNVTELVNSIIGVQTPGSLPDTLSGAHSLQRRISYFDVNWISWNWDNVNVDLNKEVKKSRPLLGEEDDQCMFGWFANNPGWKYYWSVTDNPDPGYKENYSDIGDENAVHGELYFNTYGGLMASVMTTKMVLNAKRQLVVIDTIVVKAICDYVMKYWKKKVNLTTISLYLMLKL</sequence>
<comment type="similarity">
    <text evidence="1">To yeast YER187w.</text>
</comment>
<accession>P53054</accession>
<accession>D6VV72</accession>
<organism>
    <name type="scientific">Saccharomyces cerevisiae (strain ATCC 204508 / S288c)</name>
    <name type="common">Baker's yeast</name>
    <dbReference type="NCBI Taxonomy" id="559292"/>
    <lineage>
        <taxon>Eukaryota</taxon>
        <taxon>Fungi</taxon>
        <taxon>Dikarya</taxon>
        <taxon>Ascomycota</taxon>
        <taxon>Saccharomycotina</taxon>
        <taxon>Saccharomycetes</taxon>
        <taxon>Saccharomycetales</taxon>
        <taxon>Saccharomycetaceae</taxon>
        <taxon>Saccharomyces</taxon>
    </lineage>
</organism>
<dbReference type="EMBL" id="X94357">
    <property type="protein sequence ID" value="CAA64125.1"/>
    <property type="molecule type" value="Genomic_DNA"/>
</dbReference>
<dbReference type="EMBL" id="Z72784">
    <property type="protein sequence ID" value="CAA96982.1"/>
    <property type="molecule type" value="Genomic_DNA"/>
</dbReference>
<dbReference type="EMBL" id="BK006941">
    <property type="protein sequence ID" value="DAA07856.1"/>
    <property type="molecule type" value="Genomic_DNA"/>
</dbReference>
<dbReference type="PIR" id="S61599">
    <property type="entry name" value="S61599"/>
</dbReference>
<dbReference type="RefSeq" id="NP_011252.1">
    <property type="nucleotide sequence ID" value="NM_001181128.1"/>
</dbReference>
<dbReference type="BioGRID" id="33017">
    <property type="interactions" value="29"/>
</dbReference>
<dbReference type="FunCoup" id="P53054">
    <property type="interactions" value="23"/>
</dbReference>
<dbReference type="IntAct" id="P53054">
    <property type="interactions" value="1"/>
</dbReference>
<dbReference type="MINT" id="P53054"/>
<dbReference type="STRING" id="4932.YGL262W"/>
<dbReference type="PaxDb" id="4932-YGL262W"/>
<dbReference type="PeptideAtlas" id="P53054"/>
<dbReference type="EnsemblFungi" id="YGL262W_mRNA">
    <property type="protein sequence ID" value="YGL262W"/>
    <property type="gene ID" value="YGL262W"/>
</dbReference>
<dbReference type="GeneID" id="852629"/>
<dbReference type="KEGG" id="sce:YGL262W"/>
<dbReference type="AGR" id="SGD:S000003231"/>
<dbReference type="SGD" id="S000003231">
    <property type="gene designation" value="YGL262W"/>
</dbReference>
<dbReference type="VEuPathDB" id="FungiDB:YGL262W"/>
<dbReference type="eggNOG" id="ENOG502RZ0B">
    <property type="taxonomic scope" value="Eukaryota"/>
</dbReference>
<dbReference type="HOGENOM" id="CLU_1571538_0_0_1"/>
<dbReference type="InParanoid" id="P53054"/>
<dbReference type="OMA" id="GWKYYWS"/>
<dbReference type="OrthoDB" id="4038251at2759"/>
<dbReference type="BioCyc" id="YEAST:G3O-30730-MONOMER"/>
<dbReference type="BioGRID-ORCS" id="852629">
    <property type="hits" value="0 hits in 10 CRISPR screens"/>
</dbReference>
<dbReference type="PRO" id="PR:P53054"/>
<dbReference type="Proteomes" id="UP000002311">
    <property type="component" value="Chromosome VII"/>
</dbReference>
<dbReference type="RNAct" id="P53054">
    <property type="molecule type" value="protein"/>
</dbReference>
<dbReference type="InterPro" id="IPR035237">
    <property type="entry name" value="DUF5341"/>
</dbReference>
<dbReference type="Pfam" id="PF17276">
    <property type="entry name" value="DUF5341"/>
    <property type="match status" value="1"/>
</dbReference>
<feature type="chain" id="PRO_0000202702" description="Putative uncharacterized protein YGL262W">
    <location>
        <begin position="1"/>
        <end position="175"/>
    </location>
</feature>
<name>YGZG_YEAST</name>